<evidence type="ECO:0000250" key="1"/>
<evidence type="ECO:0000255" key="2"/>
<evidence type="ECO:0000255" key="3">
    <source>
        <dbReference type="PROSITE-ProRule" id="PRU00625"/>
    </source>
</evidence>
<evidence type="ECO:0000256" key="4">
    <source>
        <dbReference type="SAM" id="MobiDB-lite"/>
    </source>
</evidence>
<evidence type="ECO:0000305" key="5"/>
<keyword id="KW-0175">Coiled coil</keyword>
<keyword id="KW-0963">Cytoplasm</keyword>
<keyword id="KW-0238">DNA-binding</keyword>
<keyword id="KW-0507">mRNA processing</keyword>
<keyword id="KW-0508">mRNA splicing</keyword>
<keyword id="KW-0539">Nucleus</keyword>
<keyword id="KW-0677">Repeat</keyword>
<keyword id="KW-0747">Spliceosome</keyword>
<comment type="function">
    <text evidence="1">Involved in pre-mRNA splicing and cell cycle control.</text>
</comment>
<comment type="subunit">
    <text evidence="1">Associated with the spliceosome.</text>
</comment>
<comment type="subcellular location">
    <subcellularLocation>
        <location evidence="1">Cytoplasm</location>
    </subcellularLocation>
    <subcellularLocation>
        <location evidence="3">Nucleus</location>
    </subcellularLocation>
</comment>
<comment type="similarity">
    <text evidence="5">Belongs to the CEF1 family.</text>
</comment>
<sequence length="833" mass="92625">MRVIVKGGVWRNTEDEILKAAISKYGKNQWARISSLLVRKTPKQCKARWYEWLDPSIKKTEDEKLLHLAKLMPTQWRTIAPIVGRTATQCLERYQKLLDDAEARDNEELGLGAGEDESSKPATDARGLRPGEIDTDPETRPARPDPIDMDDDEKEMLSEARARLANTQGKKAKRKARERQLEEARRLAFLQKKRELKAAGINLRAKPKKKGMDYNADIPFEKQPAPGFYDVTEEQAKVHAAPVGSTLRALEGKRKQELDEIEERKKRQKKGDGKSNQTQQFVAAREAQIKKLKEQEQIIRRRKLNLPIPQVGERELEDIVKIGQAGELARELVGDGNKATEGLLGEYEALGQAKMARTPRTAPQQDNVMAEARNLRNMMAAQTPLLGEENTPLHGPSVGTGFEGATPRHDVAATPNPLATSARGGVLTSTRTVPGVGTTPLRTPFRDDLNINDDASVYGETPMNDRRRLAESRRALKAGFAALPKPENNFELAETEEDEEEAEEAEPLTEEDAAERDARLKAAREEEERRELERRSTVIKKGLPRPVNVNTYKLLDDLNSAIVEQTDEEMAAAFKLVNLEVAMLMKHDSIAHPLPGTSTPGGLASEYDMPEDDFVAEAKNAIHTELANALGLPGASDEHLRLAIGAAAEENEAAFAEAWAEEREGLVYSPSTRTWVDKTSLSPEELSACYAAMINASRDRVIAEATKAAKAEKKLGKQLGGYQTLNEKAKKAIVDVMEEIHQTKRDMETFLMLKGIEEAAAPARLEKIREEVAVLEKRERDLQARYAELNDRRRENLAAIEQLEEDKIVLAAQVALEAQEGEVADGDVDMNGA</sequence>
<feature type="chain" id="PRO_0000410154" description="Pre-mRNA-splicing factor CEF1">
    <location>
        <begin position="1"/>
        <end position="833"/>
    </location>
</feature>
<feature type="domain" description="HTH myb-type 1" evidence="3">
    <location>
        <begin position="2"/>
        <end position="57"/>
    </location>
</feature>
<feature type="domain" description="HTH myb-type 2" evidence="3">
    <location>
        <begin position="58"/>
        <end position="102"/>
    </location>
</feature>
<feature type="DNA-binding region" description="H-T-H motif" evidence="3">
    <location>
        <begin position="30"/>
        <end position="53"/>
    </location>
</feature>
<feature type="DNA-binding region" description="H-T-H motif" evidence="3">
    <location>
        <begin position="76"/>
        <end position="98"/>
    </location>
</feature>
<feature type="region of interest" description="Disordered" evidence="4">
    <location>
        <begin position="109"/>
        <end position="150"/>
    </location>
</feature>
<feature type="region of interest" description="Disordered" evidence="4">
    <location>
        <begin position="248"/>
        <end position="280"/>
    </location>
</feature>
<feature type="region of interest" description="Disordered" evidence="4">
    <location>
        <begin position="428"/>
        <end position="447"/>
    </location>
</feature>
<feature type="region of interest" description="Disordered" evidence="4">
    <location>
        <begin position="480"/>
        <end position="534"/>
    </location>
</feature>
<feature type="coiled-coil region" evidence="2">
    <location>
        <begin position="245"/>
        <end position="306"/>
    </location>
</feature>
<feature type="coiled-coil region" evidence="2">
    <location>
        <begin position="722"/>
        <end position="808"/>
    </location>
</feature>
<feature type="compositionally biased region" description="Basic and acidic residues" evidence="4">
    <location>
        <begin position="126"/>
        <end position="146"/>
    </location>
</feature>
<feature type="compositionally biased region" description="Basic and acidic residues" evidence="4">
    <location>
        <begin position="250"/>
        <end position="273"/>
    </location>
</feature>
<feature type="compositionally biased region" description="Acidic residues" evidence="4">
    <location>
        <begin position="493"/>
        <end position="514"/>
    </location>
</feature>
<feature type="compositionally biased region" description="Basic and acidic residues" evidence="4">
    <location>
        <begin position="515"/>
        <end position="534"/>
    </location>
</feature>
<dbReference type="EMBL" id="AAEY01000052">
    <property type="protein sequence ID" value="EAL18176.1"/>
    <property type="molecule type" value="Genomic_DNA"/>
</dbReference>
<dbReference type="RefSeq" id="XP_772823.1">
    <property type="nucleotide sequence ID" value="XM_767730.1"/>
</dbReference>
<dbReference type="SMR" id="P0CO95"/>
<dbReference type="GeneID" id="4938892"/>
<dbReference type="KEGG" id="cnb:CNBK1950"/>
<dbReference type="VEuPathDB" id="FungiDB:CNBK1950"/>
<dbReference type="HOGENOM" id="CLU_009082_0_0_1"/>
<dbReference type="OrthoDB" id="7582at5206"/>
<dbReference type="GO" id="GO:0005829">
    <property type="term" value="C:cytosol"/>
    <property type="evidence" value="ECO:0007669"/>
    <property type="project" value="EnsemblFungi"/>
</dbReference>
<dbReference type="GO" id="GO:0140602">
    <property type="term" value="C:nucleolar peripheral inclusion body"/>
    <property type="evidence" value="ECO:0007669"/>
    <property type="project" value="EnsemblFungi"/>
</dbReference>
<dbReference type="GO" id="GO:0071014">
    <property type="term" value="C:post-mRNA release spliceosomal complex"/>
    <property type="evidence" value="ECO:0007669"/>
    <property type="project" value="EnsemblFungi"/>
</dbReference>
<dbReference type="GO" id="GO:0000974">
    <property type="term" value="C:Prp19 complex"/>
    <property type="evidence" value="ECO:0007669"/>
    <property type="project" value="EnsemblFungi"/>
</dbReference>
<dbReference type="GO" id="GO:0003677">
    <property type="term" value="F:DNA binding"/>
    <property type="evidence" value="ECO:0007669"/>
    <property type="project" value="UniProtKB-KW"/>
</dbReference>
<dbReference type="GO" id="GO:0045292">
    <property type="term" value="P:mRNA cis splicing, via spliceosome"/>
    <property type="evidence" value="ECO:0007669"/>
    <property type="project" value="EnsemblFungi"/>
</dbReference>
<dbReference type="CDD" id="cd00167">
    <property type="entry name" value="SANT"/>
    <property type="match status" value="1"/>
</dbReference>
<dbReference type="CDD" id="cd11659">
    <property type="entry name" value="SANT_CDC5_II"/>
    <property type="match status" value="1"/>
</dbReference>
<dbReference type="FunFam" id="1.10.10.60:FF:000021">
    <property type="entry name" value="CDC5 cell division cycle 5-like"/>
    <property type="match status" value="1"/>
</dbReference>
<dbReference type="Gene3D" id="1.10.10.60">
    <property type="entry name" value="Homeodomain-like"/>
    <property type="match status" value="2"/>
</dbReference>
<dbReference type="InterPro" id="IPR047242">
    <property type="entry name" value="CDC5L/Cef1"/>
</dbReference>
<dbReference type="InterPro" id="IPR021786">
    <property type="entry name" value="Cdc5p/Cef1_C"/>
</dbReference>
<dbReference type="InterPro" id="IPR009057">
    <property type="entry name" value="Homeodomain-like_sf"/>
</dbReference>
<dbReference type="InterPro" id="IPR017930">
    <property type="entry name" value="Myb_dom"/>
</dbReference>
<dbReference type="InterPro" id="IPR001005">
    <property type="entry name" value="SANT/Myb"/>
</dbReference>
<dbReference type="InterPro" id="IPR047240">
    <property type="entry name" value="SANT_CDC5L_II"/>
</dbReference>
<dbReference type="PANTHER" id="PTHR45885">
    <property type="entry name" value="CELL DIVISION CYCLE 5-LIKE PROTEIN"/>
    <property type="match status" value="1"/>
</dbReference>
<dbReference type="PANTHER" id="PTHR45885:SF1">
    <property type="entry name" value="CELL DIVISION CYCLE 5-LIKE PROTEIN"/>
    <property type="match status" value="1"/>
</dbReference>
<dbReference type="Pfam" id="PF11831">
    <property type="entry name" value="Myb_Cef"/>
    <property type="match status" value="1"/>
</dbReference>
<dbReference type="Pfam" id="PF00249">
    <property type="entry name" value="Myb_DNA-binding"/>
    <property type="match status" value="2"/>
</dbReference>
<dbReference type="SMART" id="SM00717">
    <property type="entry name" value="SANT"/>
    <property type="match status" value="2"/>
</dbReference>
<dbReference type="SUPFAM" id="SSF46689">
    <property type="entry name" value="Homeodomain-like"/>
    <property type="match status" value="1"/>
</dbReference>
<dbReference type="PROSITE" id="PS51294">
    <property type="entry name" value="HTH_MYB"/>
    <property type="match status" value="2"/>
</dbReference>
<proteinExistence type="inferred from homology"/>
<name>CEF1_CRYNB</name>
<reference key="1">
    <citation type="journal article" date="2005" name="Science">
        <title>The genome of the basidiomycetous yeast and human pathogen Cryptococcus neoformans.</title>
        <authorList>
            <person name="Loftus B.J."/>
            <person name="Fung E."/>
            <person name="Roncaglia P."/>
            <person name="Rowley D."/>
            <person name="Amedeo P."/>
            <person name="Bruno D."/>
            <person name="Vamathevan J."/>
            <person name="Miranda M."/>
            <person name="Anderson I.J."/>
            <person name="Fraser J.A."/>
            <person name="Allen J.E."/>
            <person name="Bosdet I.E."/>
            <person name="Brent M.R."/>
            <person name="Chiu R."/>
            <person name="Doering T.L."/>
            <person name="Donlin M.J."/>
            <person name="D'Souza C.A."/>
            <person name="Fox D.S."/>
            <person name="Grinberg V."/>
            <person name="Fu J."/>
            <person name="Fukushima M."/>
            <person name="Haas B.J."/>
            <person name="Huang J.C."/>
            <person name="Janbon G."/>
            <person name="Jones S.J.M."/>
            <person name="Koo H.L."/>
            <person name="Krzywinski M.I."/>
            <person name="Kwon-Chung K.J."/>
            <person name="Lengeler K.B."/>
            <person name="Maiti R."/>
            <person name="Marra M.A."/>
            <person name="Marra R.E."/>
            <person name="Mathewson C.A."/>
            <person name="Mitchell T.G."/>
            <person name="Pertea M."/>
            <person name="Riggs F.R."/>
            <person name="Salzberg S.L."/>
            <person name="Schein J.E."/>
            <person name="Shvartsbeyn A."/>
            <person name="Shin H."/>
            <person name="Shumway M."/>
            <person name="Specht C.A."/>
            <person name="Suh B.B."/>
            <person name="Tenney A."/>
            <person name="Utterback T.R."/>
            <person name="Wickes B.L."/>
            <person name="Wortman J.R."/>
            <person name="Wye N.H."/>
            <person name="Kronstad J.W."/>
            <person name="Lodge J.K."/>
            <person name="Heitman J."/>
            <person name="Davis R.W."/>
            <person name="Fraser C.M."/>
            <person name="Hyman R.W."/>
        </authorList>
    </citation>
    <scope>NUCLEOTIDE SEQUENCE [LARGE SCALE GENOMIC DNA]</scope>
    <source>
        <strain>B-3501A</strain>
    </source>
</reference>
<gene>
    <name type="primary">CEF1</name>
    <name type="ordered locus">CNBK1950</name>
</gene>
<accession>P0CO95</accession>
<accession>Q55JY9</accession>
<accession>Q5K9L1</accession>
<organism>
    <name type="scientific">Cryptococcus neoformans var. neoformans serotype D (strain B-3501A)</name>
    <name type="common">Filobasidiella neoformans</name>
    <dbReference type="NCBI Taxonomy" id="283643"/>
    <lineage>
        <taxon>Eukaryota</taxon>
        <taxon>Fungi</taxon>
        <taxon>Dikarya</taxon>
        <taxon>Basidiomycota</taxon>
        <taxon>Agaricomycotina</taxon>
        <taxon>Tremellomycetes</taxon>
        <taxon>Tremellales</taxon>
        <taxon>Cryptococcaceae</taxon>
        <taxon>Cryptococcus</taxon>
        <taxon>Cryptococcus neoformans species complex</taxon>
    </lineage>
</organism>
<protein>
    <recommendedName>
        <fullName>Pre-mRNA-splicing factor CEF1</fullName>
    </recommendedName>
</protein>